<accession>E7QE10</accession>
<proteinExistence type="inferred from homology"/>
<keyword id="KW-1003">Cell membrane</keyword>
<keyword id="KW-0966">Cell projection</keyword>
<keyword id="KW-0325">Glycoprotein</keyword>
<keyword id="KW-0472">Membrane</keyword>
<keyword id="KW-0597">Phosphoprotein</keyword>
<keyword id="KW-0728">SH3 domain</keyword>
<keyword id="KW-0346">Stress response</keyword>
<keyword id="KW-0812">Transmembrane</keyword>
<keyword id="KW-1133">Transmembrane helix</keyword>
<evidence type="ECO:0000250" key="1"/>
<evidence type="ECO:0000250" key="2">
    <source>
        <dbReference type="UniProtKB" id="P40073"/>
    </source>
</evidence>
<evidence type="ECO:0000255" key="3"/>
<evidence type="ECO:0000255" key="4">
    <source>
        <dbReference type="PROSITE-ProRule" id="PRU00192"/>
    </source>
</evidence>
<evidence type="ECO:0000256" key="5">
    <source>
        <dbReference type="SAM" id="MobiDB-lite"/>
    </source>
</evidence>
<evidence type="ECO:0000305" key="6"/>
<gene>
    <name type="primary">SHO1</name>
    <name type="synonym">SSU81</name>
    <name type="ORF">VL3_1387</name>
</gene>
<reference key="1">
    <citation type="journal article" date="2011" name="PLoS Genet.">
        <title>Whole-genome comparison reveals novel genetic elements that characterize the genome of industrial strains of Saccharomyces cerevisiae.</title>
        <authorList>
            <person name="Borneman A.R."/>
            <person name="Desany B.A."/>
            <person name="Riches D."/>
            <person name="Affourtit J.P."/>
            <person name="Forgan A.H."/>
            <person name="Pretorius I.S."/>
            <person name="Egholm M."/>
            <person name="Chambers P.J."/>
        </authorList>
    </citation>
    <scope>NUCLEOTIDE SEQUENCE [LARGE SCALE GENOMIC DNA]</scope>
    <source>
        <strain>Zymaflore VL3</strain>
    </source>
</reference>
<sequence length="367" mass="41112">MSISSKIRPTPRKPSRMATDHSFKMKNFYADPFAISSISLAIVSWVIAIGGSISSASTNESFPRFTWWGIVYQFLIICSLMLFYCFDLVDHYRIFITTSIAVAFVYNTNSATNLVYADGPKKAAASAGVILLSIINLIWILYYGGDNASPTNRWIDSFSIKGIRPSPLENSLHRARRRGNRNTTPYQNNVYNDAIRDSGYATQFDGYPQQQPSHTNYVSSTALAGFENTQPNTSEAVNLHLNTLQQRINSASNAKETNDNSNNQTNTNIGNTFDTDFSNGNTETTMGDTLGLYSDIGDDNFIYKAKALYPYDADDDDAYEISFEQNEILQVSDIEGRWWKARRANGETGIIPSNYVQLIDGPEEMHR</sequence>
<comment type="function">
    <text evidence="1">Plasma membrane osmosensor that activates the high osmolarity glycerol (HOG) MAPK signaling pathway in response to high osmolarity. Detects changes in external osmolarity and activates PBS2 through the stimulation of STE11 and targets PBS2 to the plasma membrane. PBS2 activation leads to changes in glycerol production that helps to balance the intracellular and external osmotic pressures. Activates also HOG1 in response to heat stress and mediates resistance to oxidative stress. Involved in the regulation of the mating pathway. May be a receptor that feeds into the pseudohyphal growth pathway (By similarity).</text>
</comment>
<comment type="subunit">
    <text evidence="1">Forms homooligomers (By similarity). Interacts (via the SH3 domain) with PBS2. Interacts with FUS1, STE11, STE50 and RNA polymerase II (By similarity).</text>
</comment>
<comment type="subcellular location">
    <subcellularLocation>
        <location evidence="1">Cell membrane</location>
        <topology evidence="1">Multi-pass membrane protein</topology>
    </subcellularLocation>
    <subcellularLocation>
        <location evidence="1">Bud</location>
    </subcellularLocation>
    <subcellularLocation>
        <location evidence="1">Bud neck</location>
    </subcellularLocation>
    <subcellularLocation>
        <location evidence="1">Cell projection</location>
    </subcellularLocation>
    <text evidence="1">Localizes at the tip of the mating projection during conjugation.</text>
</comment>
<comment type="similarity">
    <text evidence="6">Belongs to the SHO1 family.</text>
</comment>
<feature type="chain" id="PRO_0000410416" description="High osmolarity signaling protein SHO1">
    <location>
        <begin position="1"/>
        <end position="367"/>
    </location>
</feature>
<feature type="topological domain" description="Cytoplasmic" evidence="3">
    <location>
        <begin position="1"/>
        <end position="32"/>
    </location>
</feature>
<feature type="transmembrane region" description="Helical" evidence="3">
    <location>
        <begin position="33"/>
        <end position="53"/>
    </location>
</feature>
<feature type="topological domain" description="Extracellular" evidence="3">
    <location>
        <begin position="54"/>
        <end position="65"/>
    </location>
</feature>
<feature type="transmembrane region" description="Helical" evidence="3">
    <location>
        <begin position="66"/>
        <end position="86"/>
    </location>
</feature>
<feature type="topological domain" description="Cytoplasmic" evidence="3">
    <location>
        <begin position="87"/>
        <end position="93"/>
    </location>
</feature>
<feature type="transmembrane region" description="Helical" evidence="3">
    <location>
        <begin position="94"/>
        <end position="114"/>
    </location>
</feature>
<feature type="topological domain" description="Extracellular" evidence="3">
    <location>
        <begin position="115"/>
        <end position="122"/>
    </location>
</feature>
<feature type="transmembrane region" description="Helical" evidence="3">
    <location>
        <begin position="123"/>
        <end position="143"/>
    </location>
</feature>
<feature type="topological domain" description="Cytoplasmic" evidence="3">
    <location>
        <begin position="144"/>
        <end position="367"/>
    </location>
</feature>
<feature type="domain" description="SH3" evidence="4">
    <location>
        <begin position="300"/>
        <end position="361"/>
    </location>
</feature>
<feature type="region of interest" description="Disordered" evidence="5">
    <location>
        <begin position="252"/>
        <end position="276"/>
    </location>
</feature>
<feature type="compositionally biased region" description="Low complexity" evidence="5">
    <location>
        <begin position="259"/>
        <end position="272"/>
    </location>
</feature>
<feature type="modified residue" description="Phosphoserine" evidence="2">
    <location>
        <position position="166"/>
    </location>
</feature>
<feature type="glycosylation site" description="N-linked (GlcNAc...) asparagine" evidence="3">
    <location>
        <position position="59"/>
    </location>
</feature>
<protein>
    <recommendedName>
        <fullName>High osmolarity signaling protein SHO1</fullName>
    </recommendedName>
    <alternativeName>
        <fullName>Osmosensor SHO1</fullName>
    </alternativeName>
    <alternativeName>
        <fullName>Suppressor of SUA8-1 mutation</fullName>
    </alternativeName>
    <alternativeName>
        <fullName>Synthetic high osmolarity-sensitive protein 1</fullName>
    </alternativeName>
</protein>
<dbReference type="EMBL" id="AEJS01000026">
    <property type="protein sequence ID" value="EGA87134.1"/>
    <property type="molecule type" value="Genomic_DNA"/>
</dbReference>
<dbReference type="SMR" id="E7QE10"/>
<dbReference type="GlyCosmos" id="E7QE10">
    <property type="glycosylation" value="1 site, No reported glycans"/>
</dbReference>
<dbReference type="HOGENOM" id="CLU_043316_0_0_1"/>
<dbReference type="OrthoDB" id="5983572at2759"/>
<dbReference type="GO" id="GO:0042995">
    <property type="term" value="C:cell projection"/>
    <property type="evidence" value="ECO:0007669"/>
    <property type="project" value="UniProtKB-SubCell"/>
</dbReference>
<dbReference type="GO" id="GO:0005935">
    <property type="term" value="C:cellular bud neck"/>
    <property type="evidence" value="ECO:0007669"/>
    <property type="project" value="UniProtKB-SubCell"/>
</dbReference>
<dbReference type="GO" id="GO:0005886">
    <property type="term" value="C:plasma membrane"/>
    <property type="evidence" value="ECO:0007669"/>
    <property type="project" value="UniProtKB-SubCell"/>
</dbReference>
<dbReference type="GO" id="GO:0030833">
    <property type="term" value="P:regulation of actin filament polymerization"/>
    <property type="evidence" value="ECO:0007669"/>
    <property type="project" value="TreeGrafter"/>
</dbReference>
<dbReference type="CDD" id="cd11855">
    <property type="entry name" value="SH3_Sho1p"/>
    <property type="match status" value="1"/>
</dbReference>
<dbReference type="FunFam" id="2.30.30.40:FF:000213">
    <property type="entry name" value="High osmolarity signaling protein SHO1"/>
    <property type="match status" value="1"/>
</dbReference>
<dbReference type="Gene3D" id="2.30.30.40">
    <property type="entry name" value="SH3 Domains"/>
    <property type="match status" value="1"/>
</dbReference>
<dbReference type="InterPro" id="IPR036028">
    <property type="entry name" value="SH3-like_dom_sf"/>
</dbReference>
<dbReference type="InterPro" id="IPR001452">
    <property type="entry name" value="SH3_domain"/>
</dbReference>
<dbReference type="InterPro" id="IPR035522">
    <property type="entry name" value="Sho1_SH3"/>
</dbReference>
<dbReference type="PANTHER" id="PTHR15735">
    <property type="entry name" value="FCH AND DOUBLE SH3 DOMAINS PROTEIN"/>
    <property type="match status" value="1"/>
</dbReference>
<dbReference type="PANTHER" id="PTHR15735:SF20">
    <property type="entry name" value="HIGH OSMOLARITY SIGNALING PROTEIN SHO1"/>
    <property type="match status" value="1"/>
</dbReference>
<dbReference type="Pfam" id="PF00018">
    <property type="entry name" value="SH3_1"/>
    <property type="match status" value="1"/>
</dbReference>
<dbReference type="PRINTS" id="PR00452">
    <property type="entry name" value="SH3DOMAIN"/>
</dbReference>
<dbReference type="SMART" id="SM00326">
    <property type="entry name" value="SH3"/>
    <property type="match status" value="1"/>
</dbReference>
<dbReference type="SUPFAM" id="SSF50044">
    <property type="entry name" value="SH3-domain"/>
    <property type="match status" value="1"/>
</dbReference>
<dbReference type="PROSITE" id="PS50002">
    <property type="entry name" value="SH3"/>
    <property type="match status" value="1"/>
</dbReference>
<organism>
    <name type="scientific">Saccharomyces cerevisiae (strain Zymaflore VL3)</name>
    <name type="common">Baker's yeast</name>
    <dbReference type="NCBI Taxonomy" id="764100"/>
    <lineage>
        <taxon>Eukaryota</taxon>
        <taxon>Fungi</taxon>
        <taxon>Dikarya</taxon>
        <taxon>Ascomycota</taxon>
        <taxon>Saccharomycotina</taxon>
        <taxon>Saccharomycetes</taxon>
        <taxon>Saccharomycetales</taxon>
        <taxon>Saccharomycetaceae</taxon>
        <taxon>Saccharomyces</taxon>
    </lineage>
</organism>
<name>SHO1_YEASZ</name>